<protein>
    <recommendedName>
        <fullName>Threonine--tRNA ligase catalytic subunit</fullName>
        <ecNumber evidence="3">6.1.1.3</ecNumber>
    </recommendedName>
    <alternativeName>
        <fullName>Threonyl-tRNA synthetase catalytic subunit</fullName>
        <shortName>ThrRS-cat</shortName>
    </alternativeName>
</protein>
<keyword id="KW-0030">Aminoacyl-tRNA synthetase</keyword>
<keyword id="KW-0067">ATP-binding</keyword>
<keyword id="KW-0963">Cytoplasm</keyword>
<keyword id="KW-0436">Ligase</keyword>
<keyword id="KW-0479">Metal-binding</keyword>
<keyword id="KW-0547">Nucleotide-binding</keyword>
<keyword id="KW-0648">Protein biosynthesis</keyword>
<keyword id="KW-0694">RNA-binding</keyword>
<keyword id="KW-0820">tRNA-binding</keyword>
<keyword id="KW-0862">Zinc</keyword>
<comment type="function">
    <text evidence="1">Catalyzes the attachment of threonine to tRNA(Thr) in a two-step reaction: L-threonine is first activated by ATP to form Thr-AMP and then transferred to the acceptor end of tRNA(Thr). Also activates L-serine and transfers it to tRNA(Thr) but cannot deacylate incorrectly charged amino acid; unlike most archaea the editing function is found in a freestanding protein.</text>
</comment>
<comment type="catalytic activity">
    <reaction evidence="3">
        <text>tRNA(Thr) + L-threonine + ATP = L-threonyl-tRNA(Thr) + AMP + diphosphate + H(+)</text>
        <dbReference type="Rhea" id="RHEA:24624"/>
        <dbReference type="Rhea" id="RHEA-COMP:9670"/>
        <dbReference type="Rhea" id="RHEA-COMP:9704"/>
        <dbReference type="ChEBI" id="CHEBI:15378"/>
        <dbReference type="ChEBI" id="CHEBI:30616"/>
        <dbReference type="ChEBI" id="CHEBI:33019"/>
        <dbReference type="ChEBI" id="CHEBI:57926"/>
        <dbReference type="ChEBI" id="CHEBI:78442"/>
        <dbReference type="ChEBI" id="CHEBI:78534"/>
        <dbReference type="ChEBI" id="CHEBI:456215"/>
        <dbReference type="EC" id="6.1.1.3"/>
    </reaction>
</comment>
<comment type="cofactor">
    <cofactor evidence="3">
        <name>Zn(2+)</name>
        <dbReference type="ChEBI" id="CHEBI:29105"/>
    </cofactor>
    <text evidence="3">Binds 1 zinc ion per subunit.</text>
</comment>
<comment type="subunit">
    <text evidence="1 2">Homodimer (By similarity). Probably interacts with its editing subunit (By similarity).</text>
</comment>
<comment type="subcellular location">
    <subcellularLocation>
        <location evidence="3">Cytoplasm</location>
    </subcellularLocation>
</comment>
<comment type="similarity">
    <text evidence="3">Belongs to the class-II aminoacyl-tRNA synthetase family.</text>
</comment>
<gene>
    <name evidence="4" type="primary">thrS-cat</name>
    <name evidence="3" type="synonym">thrS</name>
    <name type="ordered locus">M164_0290</name>
</gene>
<evidence type="ECO:0000250" key="1">
    <source>
        <dbReference type="UniProtKB" id="Q97VW8"/>
    </source>
</evidence>
<evidence type="ECO:0000250" key="2">
    <source>
        <dbReference type="UniProtKB" id="Q9YDW0"/>
    </source>
</evidence>
<evidence type="ECO:0000255" key="3">
    <source>
        <dbReference type="HAMAP-Rule" id="MF_00184"/>
    </source>
</evidence>
<evidence type="ECO:0000305" key="4"/>
<reference key="1">
    <citation type="journal article" date="2009" name="Proc. Natl. Acad. Sci. U.S.A.">
        <title>Biogeography of the Sulfolobus islandicus pan-genome.</title>
        <authorList>
            <person name="Reno M.L."/>
            <person name="Held N.L."/>
            <person name="Fields C.J."/>
            <person name="Burke P.V."/>
            <person name="Whitaker R.J."/>
        </authorList>
    </citation>
    <scope>NUCLEOTIDE SEQUENCE [LARGE SCALE GENOMIC DNA]</scope>
    <source>
        <strain>M.16.4 / Kamchatka #3</strain>
    </source>
</reference>
<proteinExistence type="inferred from homology"/>
<feature type="chain" id="PRO_1000203921" description="Threonine--tRNA ligase catalytic subunit">
    <location>
        <begin position="1"/>
        <end position="545"/>
    </location>
</feature>
<feature type="region of interest" description="Catalytic" evidence="3">
    <location>
        <begin position="139"/>
        <end position="433"/>
    </location>
</feature>
<feature type="binding site" evidence="3">
    <location>
        <position position="231"/>
    </location>
    <ligand>
        <name>Zn(2+)</name>
        <dbReference type="ChEBI" id="CHEBI:29105"/>
    </ligand>
</feature>
<feature type="binding site" evidence="3">
    <location>
        <position position="282"/>
    </location>
    <ligand>
        <name>Zn(2+)</name>
        <dbReference type="ChEBI" id="CHEBI:29105"/>
    </ligand>
</feature>
<feature type="binding site" evidence="3">
    <location>
        <position position="410"/>
    </location>
    <ligand>
        <name>Zn(2+)</name>
        <dbReference type="ChEBI" id="CHEBI:29105"/>
    </ligand>
</feature>
<sequence>MESYKPVWLKGAVILAINLIDKGYKPVAVGLGERDFYIDVKSDTSITLDEVKKAINENVLANVPIENNQIVYKGNKVSIIEDKVSISTNLNPKYFEILNISTHHPNPNEQYVRIRGVAFETEEQLKDYLTWLEKAEETDHRLIGEKLDLFSFHEEAGSGLVLFHPKGQTIRNELIAFMREINDSMGYQEVYTSHVFKTDIWKISGHYTLYRDKLIVFNMEGDEYGVKPMNCPAHILIYKSKPRTYRDLPIRFSEFGHVYRWEKKGELYGLLRVRGFVQDDGHIFLREDQLMEEIKMLISKTVEVWHKFGFKDDDIKPYLSTRPDESIGSDELWEKATNALISALQESGLKFGIKEKEGAFYGPKIDFEIRDSLGRWWQLSTIQVDFNLPERFKLEYIDKDGIKKRPVMVHRAIYGSIDRFVAILLEHFKGKLPTWLSSVQVRVLPITDEVNEYAEKVLNDMRKRRIRAEIDYAGETLSKRIKNAYDQGVPYILIVGKKEASEGTVTVRARGNIEVRNVKFEKFLELLITEIAQRDVEQTTVKALK</sequence>
<accession>C4KKV9</accession>
<name>SYTC_SACI6</name>
<organism>
    <name type="scientific">Saccharolobus islandicus (strain M.16.4 / Kamchatka #3)</name>
    <name type="common">Sulfolobus islandicus</name>
    <dbReference type="NCBI Taxonomy" id="426118"/>
    <lineage>
        <taxon>Archaea</taxon>
        <taxon>Thermoproteota</taxon>
        <taxon>Thermoprotei</taxon>
        <taxon>Sulfolobales</taxon>
        <taxon>Sulfolobaceae</taxon>
        <taxon>Saccharolobus</taxon>
    </lineage>
</organism>
<dbReference type="EC" id="6.1.1.3" evidence="3"/>
<dbReference type="EMBL" id="CP001402">
    <property type="protein sequence ID" value="ACR40924.1"/>
    <property type="molecule type" value="Genomic_DNA"/>
</dbReference>
<dbReference type="RefSeq" id="WP_012735443.1">
    <property type="nucleotide sequence ID" value="NC_012726.1"/>
</dbReference>
<dbReference type="SMR" id="C4KKV9"/>
<dbReference type="GeneID" id="84060750"/>
<dbReference type="KEGG" id="sid:M164_0290"/>
<dbReference type="HOGENOM" id="CLU_008554_2_2_2"/>
<dbReference type="Proteomes" id="UP000001479">
    <property type="component" value="Chromosome"/>
</dbReference>
<dbReference type="GO" id="GO:0005737">
    <property type="term" value="C:cytoplasm"/>
    <property type="evidence" value="ECO:0007669"/>
    <property type="project" value="UniProtKB-SubCell"/>
</dbReference>
<dbReference type="GO" id="GO:0005524">
    <property type="term" value="F:ATP binding"/>
    <property type="evidence" value="ECO:0007669"/>
    <property type="project" value="UniProtKB-UniRule"/>
</dbReference>
<dbReference type="GO" id="GO:0046872">
    <property type="term" value="F:metal ion binding"/>
    <property type="evidence" value="ECO:0007669"/>
    <property type="project" value="UniProtKB-KW"/>
</dbReference>
<dbReference type="GO" id="GO:0004829">
    <property type="term" value="F:threonine-tRNA ligase activity"/>
    <property type="evidence" value="ECO:0007669"/>
    <property type="project" value="UniProtKB-UniRule"/>
</dbReference>
<dbReference type="GO" id="GO:0000049">
    <property type="term" value="F:tRNA binding"/>
    <property type="evidence" value="ECO:0007669"/>
    <property type="project" value="UniProtKB-KW"/>
</dbReference>
<dbReference type="GO" id="GO:0006435">
    <property type="term" value="P:threonyl-tRNA aminoacylation"/>
    <property type="evidence" value="ECO:0007669"/>
    <property type="project" value="UniProtKB-UniRule"/>
</dbReference>
<dbReference type="CDD" id="cd00860">
    <property type="entry name" value="ThrRS_anticodon"/>
    <property type="match status" value="1"/>
</dbReference>
<dbReference type="CDD" id="cd00771">
    <property type="entry name" value="ThrRS_core"/>
    <property type="match status" value="1"/>
</dbReference>
<dbReference type="FunFam" id="3.30.930.10:FF:000002">
    <property type="entry name" value="Threonine--tRNA ligase"/>
    <property type="match status" value="1"/>
</dbReference>
<dbReference type="FunFam" id="3.40.50.800:FF:000001">
    <property type="entry name" value="Threonine--tRNA ligase"/>
    <property type="match status" value="1"/>
</dbReference>
<dbReference type="Gene3D" id="3.40.50.800">
    <property type="entry name" value="Anticodon-binding domain"/>
    <property type="match status" value="1"/>
</dbReference>
<dbReference type="Gene3D" id="3.30.930.10">
    <property type="entry name" value="Bira Bifunctional Protein, Domain 2"/>
    <property type="match status" value="1"/>
</dbReference>
<dbReference type="HAMAP" id="MF_00184">
    <property type="entry name" value="Thr_tRNA_synth"/>
    <property type="match status" value="1"/>
</dbReference>
<dbReference type="InterPro" id="IPR002314">
    <property type="entry name" value="aa-tRNA-synt_IIb"/>
</dbReference>
<dbReference type="InterPro" id="IPR006195">
    <property type="entry name" value="aa-tRNA-synth_II"/>
</dbReference>
<dbReference type="InterPro" id="IPR045864">
    <property type="entry name" value="aa-tRNA-synth_II/BPL/LPL"/>
</dbReference>
<dbReference type="InterPro" id="IPR004154">
    <property type="entry name" value="Anticodon-bd"/>
</dbReference>
<dbReference type="InterPro" id="IPR036621">
    <property type="entry name" value="Anticodon-bd_dom_sf"/>
</dbReference>
<dbReference type="InterPro" id="IPR002320">
    <property type="entry name" value="Thr-tRNA-ligase_IIa"/>
</dbReference>
<dbReference type="InterPro" id="IPR018163">
    <property type="entry name" value="Thr/Ala-tRNA-synth_IIc_edit"/>
</dbReference>
<dbReference type="InterPro" id="IPR047246">
    <property type="entry name" value="ThrRS_anticodon"/>
</dbReference>
<dbReference type="InterPro" id="IPR033728">
    <property type="entry name" value="ThrRS_core"/>
</dbReference>
<dbReference type="NCBIfam" id="TIGR00418">
    <property type="entry name" value="thrS"/>
    <property type="match status" value="1"/>
</dbReference>
<dbReference type="PANTHER" id="PTHR11451:SF44">
    <property type="entry name" value="THREONINE--TRNA LIGASE, CHLOROPLASTIC_MITOCHONDRIAL 2"/>
    <property type="match status" value="1"/>
</dbReference>
<dbReference type="PANTHER" id="PTHR11451">
    <property type="entry name" value="THREONINE-TRNA LIGASE"/>
    <property type="match status" value="1"/>
</dbReference>
<dbReference type="Pfam" id="PF03129">
    <property type="entry name" value="HGTP_anticodon"/>
    <property type="match status" value="1"/>
</dbReference>
<dbReference type="Pfam" id="PF00587">
    <property type="entry name" value="tRNA-synt_2b"/>
    <property type="match status" value="1"/>
</dbReference>
<dbReference type="PRINTS" id="PR01047">
    <property type="entry name" value="TRNASYNTHTHR"/>
</dbReference>
<dbReference type="SUPFAM" id="SSF52954">
    <property type="entry name" value="Class II aaRS ABD-related"/>
    <property type="match status" value="1"/>
</dbReference>
<dbReference type="SUPFAM" id="SSF55681">
    <property type="entry name" value="Class II aaRS and biotin synthetases"/>
    <property type="match status" value="1"/>
</dbReference>
<dbReference type="SUPFAM" id="SSF55186">
    <property type="entry name" value="ThrRS/AlaRS common domain"/>
    <property type="match status" value="1"/>
</dbReference>
<dbReference type="PROSITE" id="PS50862">
    <property type="entry name" value="AA_TRNA_LIGASE_II"/>
    <property type="match status" value="1"/>
</dbReference>